<sequence>MTSVASLPEQSPGYRCRSLTGAGARTSAAGPLARLLPRRRLPPPHLPARPPGGWSRNQSHQRRGPGRCWGWGRGMTRICPLCPGAPEYINSAVSSQTLSQSCTPPQSPQPDPRPLSLRVGLALPGGRLGCGEAGSANRHWFSFLFPFIHFCWSPRAAAPGVAMNGWMPARWDHQVRRDVAGARGAPPAWGQAPSPRRSVGGPQKTLKRPKACSPRSPQHTPGVFSAPEKLGRKT</sequence>
<organism>
    <name type="scientific">Homo sapiens</name>
    <name type="common">Human</name>
    <dbReference type="NCBI Taxonomy" id="9606"/>
    <lineage>
        <taxon>Eukaryota</taxon>
        <taxon>Metazoa</taxon>
        <taxon>Chordata</taxon>
        <taxon>Craniata</taxon>
        <taxon>Vertebrata</taxon>
        <taxon>Euteleostomi</taxon>
        <taxon>Mammalia</taxon>
        <taxon>Eutheria</taxon>
        <taxon>Euarchontoglires</taxon>
        <taxon>Primates</taxon>
        <taxon>Haplorrhini</taxon>
        <taxon>Catarrhini</taxon>
        <taxon>Hominidae</taxon>
        <taxon>Homo</taxon>
    </lineage>
</organism>
<feature type="chain" id="PRO_0000325775" description="Putative uncharacterized protein FLJ36797">
    <location>
        <begin position="1"/>
        <end position="234"/>
    </location>
</feature>
<feature type="region of interest" description="Disordered" evidence="1">
    <location>
        <begin position="1"/>
        <end position="65"/>
    </location>
</feature>
<feature type="region of interest" description="Disordered" evidence="1">
    <location>
        <begin position="182"/>
        <end position="234"/>
    </location>
</feature>
<protein>
    <recommendedName>
        <fullName>Putative uncharacterized protein FLJ36797</fullName>
    </recommendedName>
</protein>
<dbReference type="EMBL" id="AK094116">
    <property type="protein sequence ID" value="BAC04291.1"/>
    <property type="molecule type" value="mRNA"/>
</dbReference>
<dbReference type="EMBL" id="AL132661">
    <property type="status" value="NOT_ANNOTATED_CDS"/>
    <property type="molecule type" value="Genomic_DNA"/>
</dbReference>
<dbReference type="EMBL" id="BC110806">
    <property type="status" value="NOT_ANNOTATED_CDS"/>
    <property type="molecule type" value="mRNA"/>
</dbReference>
<dbReference type="BioMuta" id="-"/>
<dbReference type="DMDM" id="74729735"/>
<dbReference type="AGR" id="HGNC:43917"/>
<dbReference type="neXtProt" id="NX_Q8N9P0"/>
<dbReference type="InParanoid" id="Q8N9P0"/>
<dbReference type="PAN-GO" id="Q8N9P0">
    <property type="GO annotations" value="0 GO annotations based on evolutionary models"/>
</dbReference>
<dbReference type="PhylomeDB" id="Q8N9P0"/>
<dbReference type="Pharos" id="Q8N9P0">
    <property type="development level" value="Tdark"/>
</dbReference>
<dbReference type="Proteomes" id="UP000005640">
    <property type="component" value="Unplaced"/>
</dbReference>
<dbReference type="RNAct" id="Q8N9P0">
    <property type="molecule type" value="protein"/>
</dbReference>
<reference key="1">
    <citation type="journal article" date="2004" name="Nat. Genet.">
        <title>Complete sequencing and characterization of 21,243 full-length human cDNAs.</title>
        <authorList>
            <person name="Ota T."/>
            <person name="Suzuki Y."/>
            <person name="Nishikawa T."/>
            <person name="Otsuki T."/>
            <person name="Sugiyama T."/>
            <person name="Irie R."/>
            <person name="Wakamatsu A."/>
            <person name="Hayashi K."/>
            <person name="Sato H."/>
            <person name="Nagai K."/>
            <person name="Kimura K."/>
            <person name="Makita H."/>
            <person name="Sekine M."/>
            <person name="Obayashi M."/>
            <person name="Nishi T."/>
            <person name="Shibahara T."/>
            <person name="Tanaka T."/>
            <person name="Ishii S."/>
            <person name="Yamamoto J."/>
            <person name="Saito K."/>
            <person name="Kawai Y."/>
            <person name="Isono Y."/>
            <person name="Nakamura Y."/>
            <person name="Nagahari K."/>
            <person name="Murakami K."/>
            <person name="Yasuda T."/>
            <person name="Iwayanagi T."/>
            <person name="Wagatsuma M."/>
            <person name="Shiratori A."/>
            <person name="Sudo H."/>
            <person name="Hosoiri T."/>
            <person name="Kaku Y."/>
            <person name="Kodaira H."/>
            <person name="Kondo H."/>
            <person name="Sugawara M."/>
            <person name="Takahashi M."/>
            <person name="Kanda K."/>
            <person name="Yokoi T."/>
            <person name="Furuya T."/>
            <person name="Kikkawa E."/>
            <person name="Omura Y."/>
            <person name="Abe K."/>
            <person name="Kamihara K."/>
            <person name="Katsuta N."/>
            <person name="Sato K."/>
            <person name="Tanikawa M."/>
            <person name="Yamazaki M."/>
            <person name="Ninomiya K."/>
            <person name="Ishibashi T."/>
            <person name="Yamashita H."/>
            <person name="Murakawa K."/>
            <person name="Fujimori K."/>
            <person name="Tanai H."/>
            <person name="Kimata M."/>
            <person name="Watanabe M."/>
            <person name="Hiraoka S."/>
            <person name="Chiba Y."/>
            <person name="Ishida S."/>
            <person name="Ono Y."/>
            <person name="Takiguchi S."/>
            <person name="Watanabe S."/>
            <person name="Yosida M."/>
            <person name="Hotuta T."/>
            <person name="Kusano J."/>
            <person name="Kanehori K."/>
            <person name="Takahashi-Fujii A."/>
            <person name="Hara H."/>
            <person name="Tanase T.-O."/>
            <person name="Nomura Y."/>
            <person name="Togiya S."/>
            <person name="Komai F."/>
            <person name="Hara R."/>
            <person name="Takeuchi K."/>
            <person name="Arita M."/>
            <person name="Imose N."/>
            <person name="Musashino K."/>
            <person name="Yuuki H."/>
            <person name="Oshima A."/>
            <person name="Sasaki N."/>
            <person name="Aotsuka S."/>
            <person name="Yoshikawa Y."/>
            <person name="Matsunawa H."/>
            <person name="Ichihara T."/>
            <person name="Shiohata N."/>
            <person name="Sano S."/>
            <person name="Moriya S."/>
            <person name="Momiyama H."/>
            <person name="Satoh N."/>
            <person name="Takami S."/>
            <person name="Terashima Y."/>
            <person name="Suzuki O."/>
            <person name="Nakagawa S."/>
            <person name="Senoh A."/>
            <person name="Mizoguchi H."/>
            <person name="Goto Y."/>
            <person name="Shimizu F."/>
            <person name="Wakebe H."/>
            <person name="Hishigaki H."/>
            <person name="Watanabe T."/>
            <person name="Sugiyama A."/>
            <person name="Takemoto M."/>
            <person name="Kawakami B."/>
            <person name="Yamazaki M."/>
            <person name="Watanabe K."/>
            <person name="Kumagai A."/>
            <person name="Itakura S."/>
            <person name="Fukuzumi Y."/>
            <person name="Fujimori Y."/>
            <person name="Komiyama M."/>
            <person name="Tashiro H."/>
            <person name="Tanigami A."/>
            <person name="Fujiwara T."/>
            <person name="Ono T."/>
            <person name="Yamada K."/>
            <person name="Fujii Y."/>
            <person name="Ozaki K."/>
            <person name="Hirao M."/>
            <person name="Ohmori Y."/>
            <person name="Kawabata A."/>
            <person name="Hikiji T."/>
            <person name="Kobatake N."/>
            <person name="Inagaki H."/>
            <person name="Ikema Y."/>
            <person name="Okamoto S."/>
            <person name="Okitani R."/>
            <person name="Kawakami T."/>
            <person name="Noguchi S."/>
            <person name="Itoh T."/>
            <person name="Shigeta K."/>
            <person name="Senba T."/>
            <person name="Matsumura K."/>
            <person name="Nakajima Y."/>
            <person name="Mizuno T."/>
            <person name="Morinaga M."/>
            <person name="Sasaki M."/>
            <person name="Togashi T."/>
            <person name="Oyama M."/>
            <person name="Hata H."/>
            <person name="Watanabe M."/>
            <person name="Komatsu T."/>
            <person name="Mizushima-Sugano J."/>
            <person name="Satoh T."/>
            <person name="Shirai Y."/>
            <person name="Takahashi Y."/>
            <person name="Nakagawa K."/>
            <person name="Okumura K."/>
            <person name="Nagase T."/>
            <person name="Nomura N."/>
            <person name="Kikuchi H."/>
            <person name="Masuho Y."/>
            <person name="Yamashita R."/>
            <person name="Nakai K."/>
            <person name="Yada T."/>
            <person name="Nakamura Y."/>
            <person name="Ohara O."/>
            <person name="Isogai T."/>
            <person name="Sugano S."/>
        </authorList>
    </citation>
    <scope>NUCLEOTIDE SEQUENCE [LARGE SCALE MRNA]</scope>
    <source>
        <tissue>Adrenal gland</tissue>
    </source>
</reference>
<reference key="2">
    <citation type="journal article" date="2003" name="Nature">
        <title>The DNA sequence and analysis of human chromosome 6.</title>
        <authorList>
            <person name="Mungall A.J."/>
            <person name="Palmer S.A."/>
            <person name="Sims S.K."/>
            <person name="Edwards C.A."/>
            <person name="Ashurst J.L."/>
            <person name="Wilming L."/>
            <person name="Jones M.C."/>
            <person name="Horton R."/>
            <person name="Hunt S.E."/>
            <person name="Scott C.E."/>
            <person name="Gilbert J.G.R."/>
            <person name="Clamp M.E."/>
            <person name="Bethel G."/>
            <person name="Milne S."/>
            <person name="Ainscough R."/>
            <person name="Almeida J.P."/>
            <person name="Ambrose K.D."/>
            <person name="Andrews T.D."/>
            <person name="Ashwell R.I.S."/>
            <person name="Babbage A.K."/>
            <person name="Bagguley C.L."/>
            <person name="Bailey J."/>
            <person name="Banerjee R."/>
            <person name="Barker D.J."/>
            <person name="Barlow K.F."/>
            <person name="Bates K."/>
            <person name="Beare D.M."/>
            <person name="Beasley H."/>
            <person name="Beasley O."/>
            <person name="Bird C.P."/>
            <person name="Blakey S.E."/>
            <person name="Bray-Allen S."/>
            <person name="Brook J."/>
            <person name="Brown A.J."/>
            <person name="Brown J.Y."/>
            <person name="Burford D.C."/>
            <person name="Burrill W."/>
            <person name="Burton J."/>
            <person name="Carder C."/>
            <person name="Carter N.P."/>
            <person name="Chapman J.C."/>
            <person name="Clark S.Y."/>
            <person name="Clark G."/>
            <person name="Clee C.M."/>
            <person name="Clegg S."/>
            <person name="Cobley V."/>
            <person name="Collier R.E."/>
            <person name="Collins J.E."/>
            <person name="Colman L.K."/>
            <person name="Corby N.R."/>
            <person name="Coville G.J."/>
            <person name="Culley K.M."/>
            <person name="Dhami P."/>
            <person name="Davies J."/>
            <person name="Dunn M."/>
            <person name="Earthrowl M.E."/>
            <person name="Ellington A.E."/>
            <person name="Evans K.A."/>
            <person name="Faulkner L."/>
            <person name="Francis M.D."/>
            <person name="Frankish A."/>
            <person name="Frankland J."/>
            <person name="French L."/>
            <person name="Garner P."/>
            <person name="Garnett J."/>
            <person name="Ghori M.J."/>
            <person name="Gilby L.M."/>
            <person name="Gillson C.J."/>
            <person name="Glithero R.J."/>
            <person name="Grafham D.V."/>
            <person name="Grant M."/>
            <person name="Gribble S."/>
            <person name="Griffiths C."/>
            <person name="Griffiths M.N.D."/>
            <person name="Hall R."/>
            <person name="Halls K.S."/>
            <person name="Hammond S."/>
            <person name="Harley J.L."/>
            <person name="Hart E.A."/>
            <person name="Heath P.D."/>
            <person name="Heathcott R."/>
            <person name="Holmes S.J."/>
            <person name="Howden P.J."/>
            <person name="Howe K.L."/>
            <person name="Howell G.R."/>
            <person name="Huckle E."/>
            <person name="Humphray S.J."/>
            <person name="Humphries M.D."/>
            <person name="Hunt A.R."/>
            <person name="Johnson C.M."/>
            <person name="Joy A.A."/>
            <person name="Kay M."/>
            <person name="Keenan S.J."/>
            <person name="Kimberley A.M."/>
            <person name="King A."/>
            <person name="Laird G.K."/>
            <person name="Langford C."/>
            <person name="Lawlor S."/>
            <person name="Leongamornlert D.A."/>
            <person name="Leversha M."/>
            <person name="Lloyd C.R."/>
            <person name="Lloyd D.M."/>
            <person name="Loveland J.E."/>
            <person name="Lovell J."/>
            <person name="Martin S."/>
            <person name="Mashreghi-Mohammadi M."/>
            <person name="Maslen G.L."/>
            <person name="Matthews L."/>
            <person name="McCann O.T."/>
            <person name="McLaren S.J."/>
            <person name="McLay K."/>
            <person name="McMurray A."/>
            <person name="Moore M.J.F."/>
            <person name="Mullikin J.C."/>
            <person name="Niblett D."/>
            <person name="Nickerson T."/>
            <person name="Novik K.L."/>
            <person name="Oliver K."/>
            <person name="Overton-Larty E.K."/>
            <person name="Parker A."/>
            <person name="Patel R."/>
            <person name="Pearce A.V."/>
            <person name="Peck A.I."/>
            <person name="Phillimore B.J.C.T."/>
            <person name="Phillips S."/>
            <person name="Plumb R.W."/>
            <person name="Porter K.M."/>
            <person name="Ramsey Y."/>
            <person name="Ranby S.A."/>
            <person name="Rice C.M."/>
            <person name="Ross M.T."/>
            <person name="Searle S.M."/>
            <person name="Sehra H.K."/>
            <person name="Sheridan E."/>
            <person name="Skuce C.D."/>
            <person name="Smith S."/>
            <person name="Smith M."/>
            <person name="Spraggon L."/>
            <person name="Squares S.L."/>
            <person name="Steward C.A."/>
            <person name="Sycamore N."/>
            <person name="Tamlyn-Hall G."/>
            <person name="Tester J."/>
            <person name="Theaker A.J."/>
            <person name="Thomas D.W."/>
            <person name="Thorpe A."/>
            <person name="Tracey A."/>
            <person name="Tromans A."/>
            <person name="Tubby B."/>
            <person name="Wall M."/>
            <person name="Wallis J.M."/>
            <person name="West A.P."/>
            <person name="White S.S."/>
            <person name="Whitehead S.L."/>
            <person name="Whittaker H."/>
            <person name="Wild A."/>
            <person name="Willey D.J."/>
            <person name="Wilmer T.E."/>
            <person name="Wood J.M."/>
            <person name="Wray P.W."/>
            <person name="Wyatt J.C."/>
            <person name="Young L."/>
            <person name="Younger R.M."/>
            <person name="Bentley D.R."/>
            <person name="Coulson A."/>
            <person name="Durbin R.M."/>
            <person name="Hubbard T."/>
            <person name="Sulston J.E."/>
            <person name="Dunham I."/>
            <person name="Rogers J."/>
            <person name="Beck S."/>
        </authorList>
    </citation>
    <scope>NUCLEOTIDE SEQUENCE [LARGE SCALE GENOMIC DNA]</scope>
</reference>
<reference key="3">
    <citation type="journal article" date="2004" name="Genome Res.">
        <title>The status, quality, and expansion of the NIH full-length cDNA project: the Mammalian Gene Collection (MGC).</title>
        <authorList>
            <consortium name="The MGC Project Team"/>
        </authorList>
    </citation>
    <scope>NUCLEOTIDE SEQUENCE [LARGE SCALE MRNA]</scope>
    <source>
        <tissue>Ovary</tissue>
    </source>
</reference>
<proteinExistence type="uncertain"/>
<name>YF006_HUMAN</name>
<evidence type="ECO:0000256" key="1">
    <source>
        <dbReference type="SAM" id="MobiDB-lite"/>
    </source>
</evidence>
<evidence type="ECO:0000305" key="2"/>
<comment type="caution">
    <text evidence="2">Product of a dubious gene prediction.</text>
</comment>
<accession>Q8N9P0</accession>
<keyword id="KW-1185">Reference proteome</keyword>